<name>RPTN_MOUSE</name>
<organism>
    <name type="scientific">Mus musculus</name>
    <name type="common">Mouse</name>
    <dbReference type="NCBI Taxonomy" id="10090"/>
    <lineage>
        <taxon>Eukaryota</taxon>
        <taxon>Metazoa</taxon>
        <taxon>Chordata</taxon>
        <taxon>Craniata</taxon>
        <taxon>Vertebrata</taxon>
        <taxon>Euteleostomi</taxon>
        <taxon>Mammalia</taxon>
        <taxon>Eutheria</taxon>
        <taxon>Euarchontoglires</taxon>
        <taxon>Glires</taxon>
        <taxon>Rodentia</taxon>
        <taxon>Myomorpha</taxon>
        <taxon>Muroidea</taxon>
        <taxon>Muridae</taxon>
        <taxon>Murinae</taxon>
        <taxon>Mus</taxon>
        <taxon>Mus</taxon>
    </lineage>
</organism>
<sequence length="1118" mass="128619">MPQLLNSILNVSKVFQDYAEYHGVGASLSKKELKQLLLTEFGDILRRPNDPETVETILEHLDRDRNGYVDFHEYLLLVFQLVQACHHKLDSKFYGSRTSSQKEHDQEGTRSHKFSESTGRQHRQRYEGERRNSHHNQSEGQHQNVQHDQSQRQDKDSERHDTDPHCGQSETFHGDSHYGHSERQDTDYSSDQSESDNESSSSSQRLGYKSSHEQPKGQGYVFALSQSKNPEQAFHYGQSKTSGQQSSHGQSGRFRKDSYSSQTSQQESDSYEQYGSQHQKSGNSQTERQGQNSQYGQTNKKGHSSYHEQTEGQGQSFHYGQKGRKDQSFQQGQKGRKDQSPHLGQKGRQDQSPHRGQKGRQDQSPHQGQKGRQDQSPHRGQKGRQDQSPHQGQKGRQDQSPHLGQKGRQDQSPHQGQKGRQDQSPHQGQKGRQDQSSHQGQKGRQDQSSHQGQKGRQDQSSHQGQKGRQDQSSHQGQREGQDQNSQWHRTDSQGQSFHYGQTGGHSLSSHQGQTDSQGQNSNWHRTDSQGQSFHYGQTGGQGLSSHQGQTDSQGQNSNWHRTDSQGQSFHFDQAGREVQGSHHGQTDRQSQNSNWHRTDSQGQSFHFDQAGKEVQGSHQGQTDSQGQSSHWHQTDRQGQSSQQGHKDRQGQNTHQGQKGRQDLSPHQGQKGRQDQSPHLGQKGRHDQSPHQGQKGRHDQSPHQGQKGRQDLSSHQGQKGRQDQSPHLGQKGRHDQSPHRGQKGRQDQSPHQGQKGRQDQSSHQGQREGQDQNSHWHRTDRQGQSFHYGQTGGQGLSSHQGQTDSQGQNSQWHRTDSQGQSFHFDQAGREGQSSHHGQTDRQSQSSHCGQSEIGKTENQGQNRHSLGTDRTRRDSYVEQSGRSVKLSQQNSREEVRQTQSQRSHDRREQQIQQQTWKPKEDNQHKLLAQVQQEPYSYEEYDWQSQSSEQDHCGEEEYQDWDRHSVEDQENLYEMQNWQTHEEEQSHQTSDRQTHVDEQNQQRQHRQTHEENHDHQHGRHHEDEHNHRRQDHHQQRERQTHEEKEKYQGGQDQSRSFPNREKSHMSEDDQCEGPQGRRFHPTHGGGKSQRREKSGNHPTKPANYSSPLYDYVQEQAAYQY</sequence>
<evidence type="ECO:0000250" key="1"/>
<evidence type="ECO:0000255" key="2">
    <source>
        <dbReference type="PROSITE-ProRule" id="PRU00448"/>
    </source>
</evidence>
<evidence type="ECO:0000256" key="3">
    <source>
        <dbReference type="SAM" id="MobiDB-lite"/>
    </source>
</evidence>
<evidence type="ECO:0000269" key="4">
    <source>
    </source>
</evidence>
<evidence type="ECO:0000305" key="5"/>
<gene>
    <name type="primary">Rptn</name>
</gene>
<proteinExistence type="evidence at transcript level"/>
<protein>
    <recommendedName>
        <fullName>Repetin</fullName>
    </recommendedName>
</protein>
<keyword id="KW-0106">Calcium</keyword>
<keyword id="KW-0272">Extracellular matrix</keyword>
<keyword id="KW-0479">Metal-binding</keyword>
<keyword id="KW-1185">Reference proteome</keyword>
<keyword id="KW-0677">Repeat</keyword>
<keyword id="KW-0964">Secreted</keyword>
<accession>P97347</accession>
<accession>G3X968</accession>
<feature type="chain" id="PRO_0000144041" description="Repetin">
    <location>
        <begin position="1"/>
        <end position="1118"/>
    </location>
</feature>
<feature type="domain" description="EF-hand 1" evidence="5">
    <location>
        <begin position="13"/>
        <end position="48"/>
    </location>
</feature>
<feature type="domain" description="EF-hand 2" evidence="2">
    <location>
        <begin position="49"/>
        <end position="84"/>
    </location>
</feature>
<feature type="repeat" description="1-1">
    <location>
        <begin position="273"/>
        <end position="284"/>
    </location>
</feature>
<feature type="repeat" description="1-2">
    <location>
        <begin position="285"/>
        <end position="296"/>
    </location>
</feature>
<feature type="repeat" description="1-3">
    <location>
        <begin position="297"/>
        <end position="308"/>
    </location>
</feature>
<feature type="repeat" description="1-4">
    <location>
        <begin position="309"/>
        <end position="320"/>
    </location>
</feature>
<feature type="repeat" description="2-1">
    <location>
        <begin position="321"/>
        <end position="332"/>
    </location>
</feature>
<feature type="repeat" description="2-2">
    <location>
        <begin position="333"/>
        <end position="344"/>
    </location>
</feature>
<feature type="repeat" description="2-3">
    <location>
        <begin position="345"/>
        <end position="356"/>
    </location>
</feature>
<feature type="repeat" description="2-4">
    <location>
        <begin position="357"/>
        <end position="368"/>
    </location>
</feature>
<feature type="repeat" description="2-5">
    <location>
        <begin position="369"/>
        <end position="380"/>
    </location>
</feature>
<feature type="repeat" description="2-6">
    <location>
        <begin position="381"/>
        <end position="392"/>
    </location>
</feature>
<feature type="repeat" description="2-7">
    <location>
        <begin position="393"/>
        <end position="404"/>
    </location>
</feature>
<feature type="repeat" description="2-8">
    <location>
        <begin position="405"/>
        <end position="416"/>
    </location>
</feature>
<feature type="repeat" description="2-9">
    <location>
        <begin position="417"/>
        <end position="428"/>
    </location>
</feature>
<feature type="repeat" description="2-10">
    <location>
        <begin position="429"/>
        <end position="440"/>
    </location>
</feature>
<feature type="repeat" description="2-11">
    <location>
        <begin position="441"/>
        <end position="452"/>
    </location>
</feature>
<feature type="repeat" description="2-12">
    <location>
        <begin position="453"/>
        <end position="464"/>
    </location>
</feature>
<feature type="repeat" description="2-13">
    <location>
        <begin position="465"/>
        <end position="476"/>
    </location>
</feature>
<feature type="repeat" description="1-5">
    <location>
        <begin position="477"/>
        <end position="488"/>
    </location>
</feature>
<feature type="repeat" description="1-6">
    <location>
        <begin position="489"/>
        <end position="500"/>
    </location>
</feature>
<feature type="repeat" description="1-7">
    <location>
        <begin position="501"/>
        <end position="512"/>
    </location>
</feature>
<feature type="repeat" description="1-8">
    <location>
        <begin position="513"/>
        <end position="524"/>
    </location>
</feature>
<feature type="repeat" description="1-9">
    <location>
        <begin position="525"/>
        <end position="536"/>
    </location>
</feature>
<feature type="repeat" description="1-10">
    <location>
        <begin position="537"/>
        <end position="548"/>
    </location>
</feature>
<feature type="repeat" description="1-11">
    <location>
        <begin position="549"/>
        <end position="560"/>
    </location>
</feature>
<feature type="repeat" description="1-12">
    <location>
        <begin position="561"/>
        <end position="572"/>
    </location>
</feature>
<feature type="repeat" description="1-13">
    <location>
        <begin position="573"/>
        <end position="584"/>
    </location>
</feature>
<feature type="repeat" description="1-14">
    <location>
        <begin position="585"/>
        <end position="596"/>
    </location>
</feature>
<feature type="repeat" description="1-15">
    <location>
        <begin position="597"/>
        <end position="608"/>
    </location>
</feature>
<feature type="repeat" description="1-16">
    <location>
        <begin position="609"/>
        <end position="620"/>
    </location>
</feature>
<feature type="repeat" description="1-17">
    <location>
        <begin position="621"/>
        <end position="632"/>
    </location>
</feature>
<feature type="repeat" description="1-18">
    <location>
        <begin position="633"/>
        <end position="644"/>
    </location>
</feature>
<feature type="repeat" description="1-19">
    <location>
        <begin position="645"/>
        <end position="656"/>
    </location>
</feature>
<feature type="repeat" description="2-14">
    <location>
        <begin position="657"/>
        <end position="668"/>
    </location>
</feature>
<feature type="repeat" description="2-15">
    <location>
        <begin position="669"/>
        <end position="680"/>
    </location>
</feature>
<feature type="repeat" description="2-16">
    <location>
        <begin position="681"/>
        <end position="692"/>
    </location>
</feature>
<feature type="repeat" description="2-17">
    <location>
        <begin position="693"/>
        <end position="704"/>
    </location>
</feature>
<feature type="repeat" description="2-18">
    <location>
        <begin position="705"/>
        <end position="716"/>
    </location>
</feature>
<feature type="repeat" description="2-19">
    <location>
        <begin position="717"/>
        <end position="728"/>
    </location>
</feature>
<feature type="repeat" description="2-20">
    <location>
        <begin position="729"/>
        <end position="740"/>
    </location>
</feature>
<feature type="repeat" description="2-21">
    <location>
        <begin position="741"/>
        <end position="752"/>
    </location>
</feature>
<feature type="repeat" description="2-22">
    <location>
        <begin position="753"/>
        <end position="764"/>
    </location>
</feature>
<feature type="repeat" description="1-20">
    <location>
        <begin position="765"/>
        <end position="776"/>
    </location>
</feature>
<feature type="repeat" description="1-21">
    <location>
        <begin position="777"/>
        <end position="788"/>
    </location>
</feature>
<feature type="repeat" description="1-22">
    <location>
        <begin position="789"/>
        <end position="800"/>
    </location>
</feature>
<feature type="repeat" description="1-23">
    <location>
        <begin position="801"/>
        <end position="812"/>
    </location>
</feature>
<feature type="repeat" description="1-24">
    <location>
        <begin position="813"/>
        <end position="824"/>
    </location>
</feature>
<feature type="repeat" description="1-25">
    <location>
        <begin position="825"/>
        <end position="836"/>
    </location>
</feature>
<feature type="repeat" description="1-26">
    <location>
        <begin position="837"/>
        <end position="848"/>
    </location>
</feature>
<feature type="region of interest" description="S-100-like">
    <location>
        <begin position="1"/>
        <end position="91"/>
    </location>
</feature>
<feature type="region of interest" description="Disordered" evidence="3">
    <location>
        <begin position="94"/>
        <end position="1118"/>
    </location>
</feature>
<feature type="region of interest" description="48 X 12 AA approximate tandem repeats of Q-[KT]-[GD]-[RS]-Q-[DG]-Q-S-[PS]-H-X-G">
    <location>
        <begin position="273"/>
        <end position="848"/>
    </location>
</feature>
<feature type="region of interest" description="22 X 12 AA approximate tandem repeats of Q-K-G-R-Q-D-Q-S-P-H-Q-G">
    <location>
        <begin position="321"/>
        <end position="764"/>
    </location>
</feature>
<feature type="compositionally biased region" description="Basic and acidic residues" evidence="3">
    <location>
        <begin position="100"/>
        <end position="115"/>
    </location>
</feature>
<feature type="compositionally biased region" description="Polar residues" evidence="3">
    <location>
        <begin position="138"/>
        <end position="148"/>
    </location>
</feature>
<feature type="compositionally biased region" description="Basic and acidic residues" evidence="3">
    <location>
        <begin position="149"/>
        <end position="164"/>
    </location>
</feature>
<feature type="compositionally biased region" description="Basic and acidic residues" evidence="3">
    <location>
        <begin position="172"/>
        <end position="186"/>
    </location>
</feature>
<feature type="compositionally biased region" description="Low complexity" evidence="3">
    <location>
        <begin position="237"/>
        <end position="252"/>
    </location>
</feature>
<feature type="compositionally biased region" description="Polar residues" evidence="3">
    <location>
        <begin position="259"/>
        <end position="299"/>
    </location>
</feature>
<feature type="compositionally biased region" description="Basic and acidic residues" evidence="3">
    <location>
        <begin position="347"/>
        <end position="363"/>
    </location>
</feature>
<feature type="compositionally biased region" description="Basic and acidic residues" evidence="3">
    <location>
        <begin position="371"/>
        <end position="387"/>
    </location>
</feature>
<feature type="compositionally biased region" description="Polar residues" evidence="3">
    <location>
        <begin position="434"/>
        <end position="466"/>
    </location>
</feature>
<feature type="compositionally biased region" description="Basic and acidic residues" evidence="3">
    <location>
        <begin position="467"/>
        <end position="481"/>
    </location>
</feature>
<feature type="compositionally biased region" description="Polar residues" evidence="3">
    <location>
        <begin position="482"/>
        <end position="535"/>
    </location>
</feature>
<feature type="compositionally biased region" description="Polar residues" evidence="3">
    <location>
        <begin position="543"/>
        <end position="570"/>
    </location>
</feature>
<feature type="compositionally biased region" description="Polar residues" evidence="3">
    <location>
        <begin position="587"/>
        <end position="606"/>
    </location>
</feature>
<feature type="compositionally biased region" description="Polar residues" evidence="3">
    <location>
        <begin position="616"/>
        <end position="643"/>
    </location>
</feature>
<feature type="compositionally biased region" description="Polar residues" evidence="3">
    <location>
        <begin position="710"/>
        <end position="726"/>
    </location>
</feature>
<feature type="compositionally biased region" description="Basic and acidic residues" evidence="3">
    <location>
        <begin position="731"/>
        <end position="747"/>
    </location>
</feature>
<feature type="compositionally biased region" description="Basic and acidic residues" evidence="3">
    <location>
        <begin position="755"/>
        <end position="769"/>
    </location>
</feature>
<feature type="compositionally biased region" description="Polar residues" evidence="3">
    <location>
        <begin position="795"/>
        <end position="822"/>
    </location>
</feature>
<feature type="compositionally biased region" description="Polar residues" evidence="3">
    <location>
        <begin position="833"/>
        <end position="848"/>
    </location>
</feature>
<feature type="compositionally biased region" description="Polar residues" evidence="3">
    <location>
        <begin position="855"/>
        <end position="864"/>
    </location>
</feature>
<feature type="compositionally biased region" description="Basic and acidic residues" evidence="3">
    <location>
        <begin position="865"/>
        <end position="875"/>
    </location>
</feature>
<feature type="compositionally biased region" description="Polar residues" evidence="3">
    <location>
        <begin position="876"/>
        <end position="889"/>
    </location>
</feature>
<feature type="compositionally biased region" description="Basic and acidic residues" evidence="3">
    <location>
        <begin position="890"/>
        <end position="908"/>
    </location>
</feature>
<feature type="compositionally biased region" description="Basic and acidic residues" evidence="3">
    <location>
        <begin position="947"/>
        <end position="965"/>
    </location>
</feature>
<feature type="compositionally biased region" description="Basic and acidic residues" evidence="3">
    <location>
        <begin position="978"/>
        <end position="998"/>
    </location>
</feature>
<feature type="compositionally biased region" description="Basic and acidic residues" evidence="3">
    <location>
        <begin position="1005"/>
        <end position="1045"/>
    </location>
</feature>
<feature type="compositionally biased region" description="Basic and acidic residues" evidence="3">
    <location>
        <begin position="1056"/>
        <end position="1065"/>
    </location>
</feature>
<feature type="binding site" evidence="5">
    <location>
        <position position="27"/>
    </location>
    <ligand>
        <name>Ca(2+)</name>
        <dbReference type="ChEBI" id="CHEBI:29108"/>
        <label>1</label>
        <note>low affinity</note>
    </ligand>
</feature>
<feature type="binding site" evidence="5">
    <location>
        <position position="32"/>
    </location>
    <ligand>
        <name>Ca(2+)</name>
        <dbReference type="ChEBI" id="CHEBI:29108"/>
        <label>1</label>
        <note>low affinity</note>
    </ligand>
</feature>
<feature type="binding site" evidence="2">
    <location>
        <position position="62"/>
    </location>
    <ligand>
        <name>Ca(2+)</name>
        <dbReference type="ChEBI" id="CHEBI:29108"/>
        <label>2</label>
        <note>high affinity</note>
    </ligand>
</feature>
<feature type="binding site" evidence="2">
    <location>
        <position position="64"/>
    </location>
    <ligand>
        <name>Ca(2+)</name>
        <dbReference type="ChEBI" id="CHEBI:29108"/>
        <label>2</label>
        <note>high affinity</note>
    </ligand>
</feature>
<feature type="binding site" evidence="2">
    <location>
        <position position="66"/>
    </location>
    <ligand>
        <name>Ca(2+)</name>
        <dbReference type="ChEBI" id="CHEBI:29108"/>
        <label>2</label>
        <note>high affinity</note>
    </ligand>
</feature>
<feature type="binding site" evidence="2">
    <location>
        <position position="68"/>
    </location>
    <ligand>
        <name>Ca(2+)</name>
        <dbReference type="ChEBI" id="CHEBI:29108"/>
        <label>2</label>
        <note>high affinity</note>
    </ligand>
</feature>
<feature type="binding site" evidence="2">
    <location>
        <position position="73"/>
    </location>
    <ligand>
        <name>Ca(2+)</name>
        <dbReference type="ChEBI" id="CHEBI:29108"/>
        <label>2</label>
        <note>high affinity</note>
    </ligand>
</feature>
<feature type="sequence conflict" description="In Ref. 1; CAA67624." evidence="5" ref="1">
    <original>HS</original>
    <variation>QG</variation>
    <location>
        <begin position="505"/>
        <end position="506"/>
    </location>
</feature>
<feature type="sequence conflict" description="In Ref. 1; CAA67624." evidence="5" ref="1">
    <original>S</original>
    <variation>SSHQGQKGRQDLS</variation>
    <location>
        <position position="664"/>
    </location>
</feature>
<feature type="sequence conflict" description="In Ref. 1; CAA67624." evidence="5" ref="1">
    <original>D</original>
    <variation>E</variation>
    <location>
        <position position="770"/>
    </location>
</feature>
<feature type="sequence conflict" description="In Ref. 1; CAA67624." evidence="5" ref="1">
    <original>Q</original>
    <variation>H</variation>
    <location>
        <position position="878"/>
    </location>
</feature>
<feature type="sequence conflict" description="In Ref. 1; CAA67624." evidence="5" ref="1">
    <original>V</original>
    <variation>G</variation>
    <location>
        <position position="883"/>
    </location>
</feature>
<dbReference type="EMBL" id="X99251">
    <property type="protein sequence ID" value="CAA67624.1"/>
    <property type="molecule type" value="Genomic_DNA"/>
</dbReference>
<dbReference type="EMBL" id="AC123859">
    <property type="status" value="NOT_ANNOTATED_CDS"/>
    <property type="molecule type" value="Genomic_DNA"/>
</dbReference>
<dbReference type="EMBL" id="CH466656">
    <property type="protein sequence ID" value="EDL00666.1"/>
    <property type="molecule type" value="Genomic_DNA"/>
</dbReference>
<dbReference type="CCDS" id="CCDS17581.1"/>
<dbReference type="PIR" id="T30251">
    <property type="entry name" value="T30251"/>
</dbReference>
<dbReference type="RefSeq" id="NP_033126.2">
    <property type="nucleotide sequence ID" value="NM_009100.2"/>
</dbReference>
<dbReference type="SMR" id="P97347"/>
<dbReference type="FunCoup" id="P97347">
    <property type="interactions" value="68"/>
</dbReference>
<dbReference type="STRING" id="10090.ENSMUSP00000044998"/>
<dbReference type="GlyGen" id="P97347">
    <property type="glycosylation" value="1 site, 1 O-linked glycan (1 site)"/>
</dbReference>
<dbReference type="iPTMnet" id="P97347"/>
<dbReference type="PhosphoSitePlus" id="P97347"/>
<dbReference type="PaxDb" id="10090-ENSMUSP00000044998"/>
<dbReference type="ProteomicsDB" id="299880"/>
<dbReference type="Antibodypedia" id="34084">
    <property type="antibodies" value="106 antibodies from 23 providers"/>
</dbReference>
<dbReference type="DNASU" id="20129"/>
<dbReference type="Ensembl" id="ENSMUST00000045912.3">
    <property type="protein sequence ID" value="ENSMUSP00000044998.3"/>
    <property type="gene ID" value="ENSMUSG00000041984.3"/>
</dbReference>
<dbReference type="GeneID" id="20129"/>
<dbReference type="KEGG" id="mmu:20129"/>
<dbReference type="UCSC" id="uc008qfh.1">
    <property type="organism name" value="mouse"/>
</dbReference>
<dbReference type="AGR" id="MGI:1099055"/>
<dbReference type="CTD" id="126638"/>
<dbReference type="MGI" id="MGI:1099055">
    <property type="gene designation" value="Rptn"/>
</dbReference>
<dbReference type="VEuPathDB" id="HostDB:ENSMUSG00000041984"/>
<dbReference type="eggNOG" id="ENOG502S86J">
    <property type="taxonomic scope" value="Eukaryota"/>
</dbReference>
<dbReference type="GeneTree" id="ENSGT00940000154467"/>
<dbReference type="HOGENOM" id="CLU_010746_0_0_1"/>
<dbReference type="InParanoid" id="P97347"/>
<dbReference type="OMA" id="RQDQSPH"/>
<dbReference type="OrthoDB" id="26525at2759"/>
<dbReference type="PhylomeDB" id="P97347"/>
<dbReference type="TreeFam" id="TF338665"/>
<dbReference type="Reactome" id="R-MMU-6809371">
    <property type="pathway name" value="Formation of the cornified envelope"/>
</dbReference>
<dbReference type="BioGRID-ORCS" id="20129">
    <property type="hits" value="3 hits in 76 CRISPR screens"/>
</dbReference>
<dbReference type="PRO" id="PR:P97347"/>
<dbReference type="Proteomes" id="UP000000589">
    <property type="component" value="Chromosome 3"/>
</dbReference>
<dbReference type="RNAct" id="P97347">
    <property type="molecule type" value="protein"/>
</dbReference>
<dbReference type="Bgee" id="ENSMUSG00000041984">
    <property type="expression patterns" value="Expressed in esophagus and 40 other cell types or tissues"/>
</dbReference>
<dbReference type="GO" id="GO:0001533">
    <property type="term" value="C:cornified envelope"/>
    <property type="evidence" value="ECO:0000314"/>
    <property type="project" value="MGI"/>
</dbReference>
<dbReference type="GO" id="GO:0005576">
    <property type="term" value="C:extracellular region"/>
    <property type="evidence" value="ECO:0007669"/>
    <property type="project" value="UniProtKB-KW"/>
</dbReference>
<dbReference type="GO" id="GO:0005509">
    <property type="term" value="F:calcium ion binding"/>
    <property type="evidence" value="ECO:0007669"/>
    <property type="project" value="InterPro"/>
</dbReference>
<dbReference type="GO" id="GO:0046914">
    <property type="term" value="F:transition metal ion binding"/>
    <property type="evidence" value="ECO:0007669"/>
    <property type="project" value="InterPro"/>
</dbReference>
<dbReference type="CDD" id="cd00213">
    <property type="entry name" value="S-100"/>
    <property type="match status" value="1"/>
</dbReference>
<dbReference type="Gene3D" id="1.10.238.10">
    <property type="entry name" value="EF-hand"/>
    <property type="match status" value="1"/>
</dbReference>
<dbReference type="InterPro" id="IPR011992">
    <property type="entry name" value="EF-hand-dom_pair"/>
</dbReference>
<dbReference type="InterPro" id="IPR018247">
    <property type="entry name" value="EF_Hand_1_Ca_BS"/>
</dbReference>
<dbReference type="InterPro" id="IPR002048">
    <property type="entry name" value="EF_hand_dom"/>
</dbReference>
<dbReference type="InterPro" id="IPR034325">
    <property type="entry name" value="S-100_dom"/>
</dbReference>
<dbReference type="InterPro" id="IPR001751">
    <property type="entry name" value="S100/CaBP7/8-like_CS"/>
</dbReference>
<dbReference type="InterPro" id="IPR013787">
    <property type="entry name" value="S100_Ca-bd_sub"/>
</dbReference>
<dbReference type="PANTHER" id="PTHR14054">
    <property type="entry name" value="REPETIN"/>
    <property type="match status" value="1"/>
</dbReference>
<dbReference type="PANTHER" id="PTHR14054:SF14">
    <property type="entry name" value="REPETIN"/>
    <property type="match status" value="1"/>
</dbReference>
<dbReference type="Pfam" id="PF01023">
    <property type="entry name" value="S_100"/>
    <property type="match status" value="1"/>
</dbReference>
<dbReference type="SMART" id="SM01394">
    <property type="entry name" value="S_100"/>
    <property type="match status" value="1"/>
</dbReference>
<dbReference type="SUPFAM" id="SSF47473">
    <property type="entry name" value="EF-hand"/>
    <property type="match status" value="1"/>
</dbReference>
<dbReference type="PROSITE" id="PS00018">
    <property type="entry name" value="EF_HAND_1"/>
    <property type="match status" value="1"/>
</dbReference>
<dbReference type="PROSITE" id="PS50222">
    <property type="entry name" value="EF_HAND_2"/>
    <property type="match status" value="1"/>
</dbReference>
<dbReference type="PROSITE" id="PS00303">
    <property type="entry name" value="S100_CABP"/>
    <property type="match status" value="1"/>
</dbReference>
<comment type="function">
    <text>Involved in the cornified cell envelope formation. Multifunctional epidermal matrix protein.</text>
</comment>
<comment type="subcellular location">
    <subcellularLocation>
        <location evidence="1">Secreted</location>
        <location evidence="1">Extracellular space</location>
        <location evidence="1">Extracellular matrix</location>
    </subcellularLocation>
</comment>
<comment type="tissue specificity">
    <text evidence="4">Detectable in the stratified internal epithelia of forestomach and tongue and to a lesser degree in normal skin epidermis, where it is restricted to the differentiated suprabasal cell layers. Overexpressed in skin tumors.</text>
</comment>
<comment type="developmental stage">
    <text evidence="4">Expressed during late differentiation of the epidermis.</text>
</comment>
<comment type="domain">
    <text evidence="4">Can be divided into a N-terminal domain with significant homology to S100-like calcium-binding proteins, a central domain containing a series of short tandem repeats, and two flanking segments with low homology to the consensus sequences of the central repeats.</text>
</comment>
<comment type="PTM">
    <text>Potential substrate of transglutaminase. Some arginines are probably converted to citrullines by peptidylarginine deimidase.</text>
</comment>
<comment type="similarity">
    <text evidence="5">Belongs to the S100-fused protein family.</text>
</comment>
<reference key="1">
    <citation type="journal article" date="1997" name="Genomics">
        <title>Repetin (Rptn), a new member of the 'fused gene' subgroup within the S100 gene family encoding a murine epidermal differentiation protein.</title>
        <authorList>
            <person name="Krieg P."/>
            <person name="Schuppler M."/>
            <person name="Koesters R."/>
            <person name="Mincheva A."/>
            <person name="Lichter P."/>
            <person name="Marks F."/>
        </authorList>
    </citation>
    <scope>NUCLEOTIDE SEQUENCE [GENOMIC DNA]</scope>
    <scope>PROBABLE FUNCTION</scope>
    <scope>TISSUE SPECIFICITY</scope>
    <scope>DEVELOPMENTAL STAGE</scope>
    <scope>DOMAIN</scope>
    <source>
        <strain>NMRI</strain>
        <tissue>Skin</tissue>
    </source>
</reference>
<reference key="2">
    <citation type="journal article" date="2009" name="PLoS Biol.">
        <title>Lineage-specific biology revealed by a finished genome assembly of the mouse.</title>
        <authorList>
            <person name="Church D.M."/>
            <person name="Goodstadt L."/>
            <person name="Hillier L.W."/>
            <person name="Zody M.C."/>
            <person name="Goldstein S."/>
            <person name="She X."/>
            <person name="Bult C.J."/>
            <person name="Agarwala R."/>
            <person name="Cherry J.L."/>
            <person name="DiCuccio M."/>
            <person name="Hlavina W."/>
            <person name="Kapustin Y."/>
            <person name="Meric P."/>
            <person name="Maglott D."/>
            <person name="Birtle Z."/>
            <person name="Marques A.C."/>
            <person name="Graves T."/>
            <person name="Zhou S."/>
            <person name="Teague B."/>
            <person name="Potamousis K."/>
            <person name="Churas C."/>
            <person name="Place M."/>
            <person name="Herschleb J."/>
            <person name="Runnheim R."/>
            <person name="Forrest D."/>
            <person name="Amos-Landgraf J."/>
            <person name="Schwartz D.C."/>
            <person name="Cheng Z."/>
            <person name="Lindblad-Toh K."/>
            <person name="Eichler E.E."/>
            <person name="Ponting C.P."/>
        </authorList>
    </citation>
    <scope>NUCLEOTIDE SEQUENCE [LARGE SCALE GENOMIC DNA]</scope>
    <source>
        <strain>C57BL/6J</strain>
    </source>
</reference>
<reference key="3">
    <citation type="submission" date="2005-07" db="EMBL/GenBank/DDBJ databases">
        <authorList>
            <person name="Mural R.J."/>
            <person name="Adams M.D."/>
            <person name="Myers E.W."/>
            <person name="Smith H.O."/>
            <person name="Venter J.C."/>
        </authorList>
    </citation>
    <scope>NUCLEOTIDE SEQUENCE [LARGE SCALE GENOMIC DNA]</scope>
</reference>